<dbReference type="EMBL" id="CP001056">
    <property type="protein sequence ID" value="ACD22243.1"/>
    <property type="molecule type" value="Genomic_DNA"/>
</dbReference>
<dbReference type="SMR" id="B2TQS1"/>
<dbReference type="KEGG" id="cbk:CLL_A3342"/>
<dbReference type="PATRIC" id="fig|935198.13.peg.3308"/>
<dbReference type="HOGENOM" id="CLU_059558_0_0_9"/>
<dbReference type="Proteomes" id="UP000001195">
    <property type="component" value="Chromosome"/>
</dbReference>
<dbReference type="GO" id="GO:0005524">
    <property type="term" value="F:ATP binding"/>
    <property type="evidence" value="ECO:0007669"/>
    <property type="project" value="UniProtKB-UniRule"/>
</dbReference>
<dbReference type="GO" id="GO:0005525">
    <property type="term" value="F:GTP binding"/>
    <property type="evidence" value="ECO:0007669"/>
    <property type="project" value="UniProtKB-UniRule"/>
</dbReference>
<dbReference type="Gene3D" id="3.40.50.300">
    <property type="entry name" value="P-loop containing nucleotide triphosphate hydrolases"/>
    <property type="match status" value="1"/>
</dbReference>
<dbReference type="HAMAP" id="MF_00636">
    <property type="entry name" value="RapZ_like"/>
    <property type="match status" value="1"/>
</dbReference>
<dbReference type="InterPro" id="IPR027417">
    <property type="entry name" value="P-loop_NTPase"/>
</dbReference>
<dbReference type="InterPro" id="IPR005337">
    <property type="entry name" value="RapZ-like"/>
</dbReference>
<dbReference type="InterPro" id="IPR053930">
    <property type="entry name" value="RapZ-like_N"/>
</dbReference>
<dbReference type="InterPro" id="IPR053931">
    <property type="entry name" value="RapZ_C"/>
</dbReference>
<dbReference type="NCBIfam" id="NF003828">
    <property type="entry name" value="PRK05416.1"/>
    <property type="match status" value="1"/>
</dbReference>
<dbReference type="PANTHER" id="PTHR30448">
    <property type="entry name" value="RNASE ADAPTER PROTEIN RAPZ"/>
    <property type="match status" value="1"/>
</dbReference>
<dbReference type="PANTHER" id="PTHR30448:SF0">
    <property type="entry name" value="RNASE ADAPTER PROTEIN RAPZ"/>
    <property type="match status" value="1"/>
</dbReference>
<dbReference type="Pfam" id="PF22740">
    <property type="entry name" value="PapZ_C"/>
    <property type="match status" value="1"/>
</dbReference>
<dbReference type="Pfam" id="PF03668">
    <property type="entry name" value="RapZ-like_N"/>
    <property type="match status" value="1"/>
</dbReference>
<dbReference type="PIRSF" id="PIRSF005052">
    <property type="entry name" value="P-loopkin"/>
    <property type="match status" value="1"/>
</dbReference>
<dbReference type="SUPFAM" id="SSF52540">
    <property type="entry name" value="P-loop containing nucleoside triphosphate hydrolases"/>
    <property type="match status" value="1"/>
</dbReference>
<gene>
    <name type="ordered locus">CLL_A3342</name>
</gene>
<evidence type="ECO:0000255" key="1">
    <source>
        <dbReference type="HAMAP-Rule" id="MF_00636"/>
    </source>
</evidence>
<comment type="function">
    <text evidence="1">Displays ATPase and GTPase activities.</text>
</comment>
<comment type="similarity">
    <text evidence="1">Belongs to the RapZ-like family.</text>
</comment>
<proteinExistence type="inferred from homology"/>
<name>Y3342_CLOBB</name>
<keyword id="KW-0067">ATP-binding</keyword>
<keyword id="KW-0342">GTP-binding</keyword>
<keyword id="KW-0547">Nucleotide-binding</keyword>
<sequence length="294" mass="33842">MRFVIVTGLSGAGKTQATRSLEDLGYFCVDNLPPKLINKFAELCSQGDGKIDKVALVIDIRGGVFFDDLFETLNYLKENEFKYEILFLDASDEVLIKRFKESRRSHPLSPDGRVLNGIIQERSKLREIKDRADIIIDTSKYAIRDLREKMNEHYGDNIESEKQLSITVLSFGFKYGIPVDSDLVFDVRFIPNPFYIPELKQYSGNDKSVKDYVLKQEETITFVEKLQDMLEYLVPNYIKEGKRQLIISIGCTGGRHRSVAIANEIYERLNKGNYKAKIEHRDVGEDLHRGEKKL</sequence>
<protein>
    <recommendedName>
        <fullName evidence="1">Nucleotide-binding protein CLL_A3342</fullName>
    </recommendedName>
</protein>
<reference key="1">
    <citation type="submission" date="2008-04" db="EMBL/GenBank/DDBJ databases">
        <title>Complete sequence of Clostridium botulinum strain Eklund.</title>
        <authorList>
            <person name="Brinkac L.M."/>
            <person name="Brown J.L."/>
            <person name="Bruce D."/>
            <person name="Detter C."/>
            <person name="Munk C."/>
            <person name="Smith L.A."/>
            <person name="Smith T.J."/>
            <person name="Sutton G."/>
            <person name="Brettin T.S."/>
        </authorList>
    </citation>
    <scope>NUCLEOTIDE SEQUENCE [LARGE SCALE GENOMIC DNA]</scope>
    <source>
        <strain>Eklund 17B / Type B</strain>
    </source>
</reference>
<organism>
    <name type="scientific">Clostridium botulinum (strain Eklund 17B / Type B)</name>
    <dbReference type="NCBI Taxonomy" id="935198"/>
    <lineage>
        <taxon>Bacteria</taxon>
        <taxon>Bacillati</taxon>
        <taxon>Bacillota</taxon>
        <taxon>Clostridia</taxon>
        <taxon>Eubacteriales</taxon>
        <taxon>Clostridiaceae</taxon>
        <taxon>Clostridium</taxon>
    </lineage>
</organism>
<feature type="chain" id="PRO_1000130742" description="Nucleotide-binding protein CLL_A3342">
    <location>
        <begin position="1"/>
        <end position="294"/>
    </location>
</feature>
<feature type="binding site" evidence="1">
    <location>
        <begin position="8"/>
        <end position="15"/>
    </location>
    <ligand>
        <name>ATP</name>
        <dbReference type="ChEBI" id="CHEBI:30616"/>
    </ligand>
</feature>
<feature type="binding site" evidence="1">
    <location>
        <begin position="59"/>
        <end position="62"/>
    </location>
    <ligand>
        <name>GTP</name>
        <dbReference type="ChEBI" id="CHEBI:37565"/>
    </ligand>
</feature>
<accession>B2TQS1</accession>